<feature type="chain" id="PRO_0000349802" description="tRNA-specific 2-thiouridylase MnmA">
    <location>
        <begin position="1"/>
        <end position="398"/>
    </location>
</feature>
<feature type="region of interest" description="Interaction with tRNA" evidence="1">
    <location>
        <begin position="163"/>
        <end position="165"/>
    </location>
</feature>
<feature type="active site" description="Nucleophile" evidence="1">
    <location>
        <position position="112"/>
    </location>
</feature>
<feature type="active site" description="Cysteine persulfide intermediate" evidence="1">
    <location>
        <position position="213"/>
    </location>
</feature>
<feature type="binding site" evidence="1">
    <location>
        <begin position="18"/>
        <end position="25"/>
    </location>
    <ligand>
        <name>ATP</name>
        <dbReference type="ChEBI" id="CHEBI:30616"/>
    </ligand>
</feature>
<feature type="binding site" evidence="1">
    <location>
        <position position="44"/>
    </location>
    <ligand>
        <name>ATP</name>
        <dbReference type="ChEBI" id="CHEBI:30616"/>
    </ligand>
</feature>
<feature type="binding site" evidence="1">
    <location>
        <position position="136"/>
    </location>
    <ligand>
        <name>ATP</name>
        <dbReference type="ChEBI" id="CHEBI:30616"/>
    </ligand>
</feature>
<feature type="site" description="Interaction with tRNA" evidence="1">
    <location>
        <position position="137"/>
    </location>
</feature>
<feature type="site" description="Interaction with tRNA" evidence="1">
    <location>
        <position position="355"/>
    </location>
</feature>
<feature type="disulfide bond" description="Alternate" evidence="1">
    <location>
        <begin position="112"/>
        <end position="213"/>
    </location>
</feature>
<protein>
    <recommendedName>
        <fullName evidence="1">tRNA-specific 2-thiouridylase MnmA</fullName>
        <ecNumber evidence="1">2.8.1.13</ecNumber>
    </recommendedName>
</protein>
<accession>A6UCQ0</accession>
<proteinExistence type="inferred from homology"/>
<keyword id="KW-0067">ATP-binding</keyword>
<keyword id="KW-0963">Cytoplasm</keyword>
<keyword id="KW-1015">Disulfide bond</keyword>
<keyword id="KW-0547">Nucleotide-binding</keyword>
<keyword id="KW-0694">RNA-binding</keyword>
<keyword id="KW-0808">Transferase</keyword>
<keyword id="KW-0819">tRNA processing</keyword>
<keyword id="KW-0820">tRNA-binding</keyword>
<name>MNMA_SINMW</name>
<dbReference type="EC" id="2.8.1.13" evidence="1"/>
<dbReference type="EMBL" id="CP000738">
    <property type="protein sequence ID" value="ABR61430.1"/>
    <property type="molecule type" value="Genomic_DNA"/>
</dbReference>
<dbReference type="RefSeq" id="WP_012066820.1">
    <property type="nucleotide sequence ID" value="NC_009636.1"/>
</dbReference>
<dbReference type="RefSeq" id="YP_001328265.1">
    <property type="nucleotide sequence ID" value="NC_009636.1"/>
</dbReference>
<dbReference type="SMR" id="A6UCQ0"/>
<dbReference type="STRING" id="366394.Smed_2600"/>
<dbReference type="GeneID" id="61611870"/>
<dbReference type="KEGG" id="smd:Smed_2600"/>
<dbReference type="PATRIC" id="fig|366394.8.peg.5793"/>
<dbReference type="eggNOG" id="COG0482">
    <property type="taxonomic scope" value="Bacteria"/>
</dbReference>
<dbReference type="HOGENOM" id="CLU_035188_0_1_5"/>
<dbReference type="OrthoDB" id="9800696at2"/>
<dbReference type="Proteomes" id="UP000001108">
    <property type="component" value="Chromosome"/>
</dbReference>
<dbReference type="GO" id="GO:0005737">
    <property type="term" value="C:cytoplasm"/>
    <property type="evidence" value="ECO:0007669"/>
    <property type="project" value="UniProtKB-SubCell"/>
</dbReference>
<dbReference type="GO" id="GO:0005524">
    <property type="term" value="F:ATP binding"/>
    <property type="evidence" value="ECO:0007669"/>
    <property type="project" value="UniProtKB-KW"/>
</dbReference>
<dbReference type="GO" id="GO:0000049">
    <property type="term" value="F:tRNA binding"/>
    <property type="evidence" value="ECO:0007669"/>
    <property type="project" value="UniProtKB-KW"/>
</dbReference>
<dbReference type="GO" id="GO:0103016">
    <property type="term" value="F:tRNA-uridine 2-sulfurtransferase activity"/>
    <property type="evidence" value="ECO:0007669"/>
    <property type="project" value="UniProtKB-EC"/>
</dbReference>
<dbReference type="GO" id="GO:0002143">
    <property type="term" value="P:tRNA wobble position uridine thiolation"/>
    <property type="evidence" value="ECO:0007669"/>
    <property type="project" value="TreeGrafter"/>
</dbReference>
<dbReference type="CDD" id="cd01998">
    <property type="entry name" value="MnmA_TRMU-like"/>
    <property type="match status" value="1"/>
</dbReference>
<dbReference type="FunFam" id="3.40.50.620:FF:000115">
    <property type="entry name" value="tRNA-specific 2-thiouridylase MnmA"/>
    <property type="match status" value="1"/>
</dbReference>
<dbReference type="Gene3D" id="2.30.30.280">
    <property type="entry name" value="Adenine nucleotide alpha hydrolases-like domains"/>
    <property type="match status" value="1"/>
</dbReference>
<dbReference type="Gene3D" id="3.40.50.620">
    <property type="entry name" value="HUPs"/>
    <property type="match status" value="1"/>
</dbReference>
<dbReference type="Gene3D" id="2.40.30.10">
    <property type="entry name" value="Translation factors"/>
    <property type="match status" value="1"/>
</dbReference>
<dbReference type="HAMAP" id="MF_00144">
    <property type="entry name" value="tRNA_thiouridyl_MnmA"/>
    <property type="match status" value="1"/>
</dbReference>
<dbReference type="InterPro" id="IPR004506">
    <property type="entry name" value="MnmA-like"/>
</dbReference>
<dbReference type="InterPro" id="IPR046885">
    <property type="entry name" value="MnmA-like_C"/>
</dbReference>
<dbReference type="InterPro" id="IPR046884">
    <property type="entry name" value="MnmA-like_central"/>
</dbReference>
<dbReference type="InterPro" id="IPR023382">
    <property type="entry name" value="MnmA-like_central_sf"/>
</dbReference>
<dbReference type="InterPro" id="IPR014729">
    <property type="entry name" value="Rossmann-like_a/b/a_fold"/>
</dbReference>
<dbReference type="NCBIfam" id="NF001138">
    <property type="entry name" value="PRK00143.1"/>
    <property type="match status" value="1"/>
</dbReference>
<dbReference type="NCBIfam" id="TIGR00420">
    <property type="entry name" value="trmU"/>
    <property type="match status" value="1"/>
</dbReference>
<dbReference type="PANTHER" id="PTHR11933:SF5">
    <property type="entry name" value="MITOCHONDRIAL TRNA-SPECIFIC 2-THIOURIDYLASE 1"/>
    <property type="match status" value="1"/>
</dbReference>
<dbReference type="PANTHER" id="PTHR11933">
    <property type="entry name" value="TRNA 5-METHYLAMINOMETHYL-2-THIOURIDYLATE -METHYLTRANSFERASE"/>
    <property type="match status" value="1"/>
</dbReference>
<dbReference type="Pfam" id="PF03054">
    <property type="entry name" value="tRNA_Me_trans"/>
    <property type="match status" value="1"/>
</dbReference>
<dbReference type="Pfam" id="PF20258">
    <property type="entry name" value="tRNA_Me_trans_C"/>
    <property type="match status" value="1"/>
</dbReference>
<dbReference type="Pfam" id="PF20259">
    <property type="entry name" value="tRNA_Me_trans_M"/>
    <property type="match status" value="1"/>
</dbReference>
<dbReference type="SUPFAM" id="SSF52402">
    <property type="entry name" value="Adenine nucleotide alpha hydrolases-like"/>
    <property type="match status" value="1"/>
</dbReference>
<comment type="function">
    <text evidence="1">Catalyzes the 2-thiolation of uridine at the wobble position (U34) of tRNA, leading to the formation of s(2)U34.</text>
</comment>
<comment type="catalytic activity">
    <reaction evidence="1">
        <text>S-sulfanyl-L-cysteinyl-[protein] + uridine(34) in tRNA + AH2 + ATP = 2-thiouridine(34) in tRNA + L-cysteinyl-[protein] + A + AMP + diphosphate + H(+)</text>
        <dbReference type="Rhea" id="RHEA:47032"/>
        <dbReference type="Rhea" id="RHEA-COMP:10131"/>
        <dbReference type="Rhea" id="RHEA-COMP:11726"/>
        <dbReference type="Rhea" id="RHEA-COMP:11727"/>
        <dbReference type="Rhea" id="RHEA-COMP:11728"/>
        <dbReference type="ChEBI" id="CHEBI:13193"/>
        <dbReference type="ChEBI" id="CHEBI:15378"/>
        <dbReference type="ChEBI" id="CHEBI:17499"/>
        <dbReference type="ChEBI" id="CHEBI:29950"/>
        <dbReference type="ChEBI" id="CHEBI:30616"/>
        <dbReference type="ChEBI" id="CHEBI:33019"/>
        <dbReference type="ChEBI" id="CHEBI:61963"/>
        <dbReference type="ChEBI" id="CHEBI:65315"/>
        <dbReference type="ChEBI" id="CHEBI:87170"/>
        <dbReference type="ChEBI" id="CHEBI:456215"/>
        <dbReference type="EC" id="2.8.1.13"/>
    </reaction>
</comment>
<comment type="subcellular location">
    <subcellularLocation>
        <location evidence="1">Cytoplasm</location>
    </subcellularLocation>
</comment>
<comment type="similarity">
    <text evidence="1">Belongs to the MnmA/TRMU family.</text>
</comment>
<organism>
    <name type="scientific">Sinorhizobium medicae (strain WSM419)</name>
    <name type="common">Ensifer medicae</name>
    <dbReference type="NCBI Taxonomy" id="366394"/>
    <lineage>
        <taxon>Bacteria</taxon>
        <taxon>Pseudomonadati</taxon>
        <taxon>Pseudomonadota</taxon>
        <taxon>Alphaproteobacteria</taxon>
        <taxon>Hyphomicrobiales</taxon>
        <taxon>Rhizobiaceae</taxon>
        <taxon>Sinorhizobium/Ensifer group</taxon>
        <taxon>Sinorhizobium</taxon>
    </lineage>
</organism>
<evidence type="ECO:0000255" key="1">
    <source>
        <dbReference type="HAMAP-Rule" id="MF_00144"/>
    </source>
</evidence>
<sequence>MNSLDFDRKPEDTRVVVAMSGGVDSSVVAGLLKREGYDVLGITLQLYDHGAAVHRAGSCCAGQDIDDARRVCETIGIPHYVLDYEARFRETVINPFAESYIAGETPIPCVACNQTVKFADLLATAKELGADALATGHYIRSRPSPMPRYPGQRALYRPADADRDQSYFLFATTQEQIDYLRFPLGGLPKSETRALAEEMGLVVAKKADSQDICFVPQGKYSDIVSKLKPNAALAGEIVHLDGRVLGAHEGILHYTIGQRRGIGVATGEPLYVVYLDARSRRVVVGPKEALETRRVYLRDVNWLGDEELEAAARSGFECFAKVRSTRRPAPAVLSCDAEGLYVELVEGEAGVAPGQACALYSGIGEDARVYGGGFIRRSEREPAAEAALKALLQAPAAA</sequence>
<gene>
    <name evidence="1" type="primary">mnmA</name>
    <name type="ordered locus">Smed_2600</name>
</gene>
<reference key="1">
    <citation type="submission" date="2007-06" db="EMBL/GenBank/DDBJ databases">
        <title>Complete sequence of Sinorhizobium medicae WSM419 chromosome.</title>
        <authorList>
            <consortium name="US DOE Joint Genome Institute"/>
            <person name="Copeland A."/>
            <person name="Lucas S."/>
            <person name="Lapidus A."/>
            <person name="Barry K."/>
            <person name="Glavina del Rio T."/>
            <person name="Dalin E."/>
            <person name="Tice H."/>
            <person name="Pitluck S."/>
            <person name="Chain P."/>
            <person name="Malfatti S."/>
            <person name="Shin M."/>
            <person name="Vergez L."/>
            <person name="Schmutz J."/>
            <person name="Larimer F."/>
            <person name="Land M."/>
            <person name="Hauser L."/>
            <person name="Kyrpides N."/>
            <person name="Mikhailova N."/>
            <person name="Reeve W.G."/>
            <person name="Richardson P."/>
        </authorList>
    </citation>
    <scope>NUCLEOTIDE SEQUENCE [LARGE SCALE GENOMIC DNA]</scope>
    <source>
        <strain>WSM419</strain>
    </source>
</reference>